<accession>Q9ZQR5</accession>
<feature type="chain" id="PRO_0000425379" description="Protein trichome birefringence-like 13">
    <location>
        <begin position="1"/>
        <end position="412"/>
    </location>
</feature>
<feature type="transmembrane region" description="Helical; Signal-anchor for type II membrane protein" evidence="3">
    <location>
        <begin position="9"/>
        <end position="29"/>
    </location>
</feature>
<feature type="short sequence motif" description="GDS motif">
    <location>
        <begin position="137"/>
        <end position="139"/>
    </location>
</feature>
<feature type="short sequence motif" description="DCXHWCLPGXXDXWN motif">
    <location>
        <begin position="385"/>
        <end position="399"/>
    </location>
</feature>
<sequence>MATTSHNKPSLFPLLSLLCFISIFLLLSLSKRASLSSPKTHRSATVFPPKPDGSLSPLSATCDFSEGSWIYDPNPRSTRYTSSCKEIFKGWNCIRNNKTNGFEISNWRWKPKHCDLPSFDPLKFLQSHRNTNIGFVGDSLNRNMFVSLFCMLKSVTGELKKWRPAGADRGFTFSQYNLTIAYHRTNLLARYGRWSANAKGGELESLGFKEGYRVDVDIPDSSWAKASSFHDILILNTGHWWWAPSKFDPVKSPMLFFEGGRPILPPIPPATGLDRVLNNMVNFVEKTKRPGGIIFFRTQSPRHFEGGDWDQGGTCQRLQPLLPGKVEEFFSVGNNGTNVEVRLVNQHLYNSLKSRSAFHVLDITRMSEYRADAHPAAAGGKNHDDCMHWCLPGLTDTWNDLFVATLHTIKAL</sequence>
<dbReference type="EMBL" id="AC006067">
    <property type="protein sequence ID" value="AAD15463.1"/>
    <property type="molecule type" value="Genomic_DNA"/>
</dbReference>
<dbReference type="EMBL" id="CP002685">
    <property type="protein sequence ID" value="AEC06309.1"/>
    <property type="molecule type" value="Genomic_DNA"/>
</dbReference>
<dbReference type="EMBL" id="AY074875">
    <property type="protein sequence ID" value="AAL75895.1"/>
    <property type="molecule type" value="mRNA"/>
</dbReference>
<dbReference type="EMBL" id="AY124844">
    <property type="protein sequence ID" value="AAM70553.1"/>
    <property type="molecule type" value="mRNA"/>
</dbReference>
<dbReference type="PIR" id="C84518">
    <property type="entry name" value="C84518"/>
</dbReference>
<dbReference type="RefSeq" id="NP_179059.1">
    <property type="nucleotide sequence ID" value="NM_127016.3"/>
</dbReference>
<dbReference type="SMR" id="Q9ZQR5"/>
<dbReference type="FunCoup" id="Q9ZQR5">
    <property type="interactions" value="173"/>
</dbReference>
<dbReference type="STRING" id="3702.Q9ZQR5"/>
<dbReference type="PaxDb" id="3702-AT2G14530.1"/>
<dbReference type="ProteomicsDB" id="234241"/>
<dbReference type="EnsemblPlants" id="AT2G14530.1">
    <property type="protein sequence ID" value="AT2G14530.1"/>
    <property type="gene ID" value="AT2G14530"/>
</dbReference>
<dbReference type="GeneID" id="815940"/>
<dbReference type="Gramene" id="AT2G14530.1">
    <property type="protein sequence ID" value="AT2G14530.1"/>
    <property type="gene ID" value="AT2G14530"/>
</dbReference>
<dbReference type="KEGG" id="ath:AT2G14530"/>
<dbReference type="Araport" id="AT2G14530"/>
<dbReference type="TAIR" id="AT2G14530">
    <property type="gene designation" value="TBL13"/>
</dbReference>
<dbReference type="eggNOG" id="ENOG502QS9I">
    <property type="taxonomic scope" value="Eukaryota"/>
</dbReference>
<dbReference type="HOGENOM" id="CLU_020953_1_0_1"/>
<dbReference type="InParanoid" id="Q9ZQR5"/>
<dbReference type="OMA" id="TWNDLFI"/>
<dbReference type="PhylomeDB" id="Q9ZQR5"/>
<dbReference type="PRO" id="PR:Q9ZQR5"/>
<dbReference type="Proteomes" id="UP000006548">
    <property type="component" value="Chromosome 2"/>
</dbReference>
<dbReference type="ExpressionAtlas" id="Q9ZQR5">
    <property type="expression patterns" value="baseline and differential"/>
</dbReference>
<dbReference type="GO" id="GO:0005794">
    <property type="term" value="C:Golgi apparatus"/>
    <property type="evidence" value="ECO:0007005"/>
    <property type="project" value="TAIR"/>
</dbReference>
<dbReference type="GO" id="GO:0016020">
    <property type="term" value="C:membrane"/>
    <property type="evidence" value="ECO:0007669"/>
    <property type="project" value="UniProtKB-SubCell"/>
</dbReference>
<dbReference type="GO" id="GO:0016413">
    <property type="term" value="F:O-acetyltransferase activity"/>
    <property type="evidence" value="ECO:0007669"/>
    <property type="project" value="InterPro"/>
</dbReference>
<dbReference type="InterPro" id="IPR029962">
    <property type="entry name" value="TBL"/>
</dbReference>
<dbReference type="InterPro" id="IPR026057">
    <property type="entry name" value="TBL_C"/>
</dbReference>
<dbReference type="InterPro" id="IPR025846">
    <property type="entry name" value="TBL_N"/>
</dbReference>
<dbReference type="PANTHER" id="PTHR32285:SF12">
    <property type="entry name" value="PROTEIN TRICHOME BIREFRINGENCE-LIKE 13"/>
    <property type="match status" value="1"/>
</dbReference>
<dbReference type="PANTHER" id="PTHR32285">
    <property type="entry name" value="PROTEIN TRICHOME BIREFRINGENCE-LIKE 9-RELATED"/>
    <property type="match status" value="1"/>
</dbReference>
<dbReference type="Pfam" id="PF13839">
    <property type="entry name" value="PC-Esterase"/>
    <property type="match status" value="1"/>
</dbReference>
<dbReference type="Pfam" id="PF14416">
    <property type="entry name" value="PMR5N"/>
    <property type="match status" value="1"/>
</dbReference>
<proteinExistence type="evidence at transcript level"/>
<reference key="1">
    <citation type="journal article" date="1999" name="Nature">
        <title>Sequence and analysis of chromosome 2 of the plant Arabidopsis thaliana.</title>
        <authorList>
            <person name="Lin X."/>
            <person name="Kaul S."/>
            <person name="Rounsley S.D."/>
            <person name="Shea T.P."/>
            <person name="Benito M.-I."/>
            <person name="Town C.D."/>
            <person name="Fujii C.Y."/>
            <person name="Mason T.M."/>
            <person name="Bowman C.L."/>
            <person name="Barnstead M.E."/>
            <person name="Feldblyum T.V."/>
            <person name="Buell C.R."/>
            <person name="Ketchum K.A."/>
            <person name="Lee J.J."/>
            <person name="Ronning C.M."/>
            <person name="Koo H.L."/>
            <person name="Moffat K.S."/>
            <person name="Cronin L.A."/>
            <person name="Shen M."/>
            <person name="Pai G."/>
            <person name="Van Aken S."/>
            <person name="Umayam L."/>
            <person name="Tallon L.J."/>
            <person name="Gill J.E."/>
            <person name="Adams M.D."/>
            <person name="Carrera A.J."/>
            <person name="Creasy T.H."/>
            <person name="Goodman H.M."/>
            <person name="Somerville C.R."/>
            <person name="Copenhaver G.P."/>
            <person name="Preuss D."/>
            <person name="Nierman W.C."/>
            <person name="White O."/>
            <person name="Eisen J.A."/>
            <person name="Salzberg S.L."/>
            <person name="Fraser C.M."/>
            <person name="Venter J.C."/>
        </authorList>
    </citation>
    <scope>NUCLEOTIDE SEQUENCE [LARGE SCALE GENOMIC DNA]</scope>
    <source>
        <strain>cv. Columbia</strain>
    </source>
</reference>
<reference key="2">
    <citation type="journal article" date="2017" name="Plant J.">
        <title>Araport11: a complete reannotation of the Arabidopsis thaliana reference genome.</title>
        <authorList>
            <person name="Cheng C.Y."/>
            <person name="Krishnakumar V."/>
            <person name="Chan A.P."/>
            <person name="Thibaud-Nissen F."/>
            <person name="Schobel S."/>
            <person name="Town C.D."/>
        </authorList>
    </citation>
    <scope>GENOME REANNOTATION</scope>
    <source>
        <strain>cv. Columbia</strain>
    </source>
</reference>
<reference key="3">
    <citation type="journal article" date="2003" name="Science">
        <title>Empirical analysis of transcriptional activity in the Arabidopsis genome.</title>
        <authorList>
            <person name="Yamada K."/>
            <person name="Lim J."/>
            <person name="Dale J.M."/>
            <person name="Chen H."/>
            <person name="Shinn P."/>
            <person name="Palm C.J."/>
            <person name="Southwick A.M."/>
            <person name="Wu H.C."/>
            <person name="Kim C.J."/>
            <person name="Nguyen M."/>
            <person name="Pham P.K."/>
            <person name="Cheuk R.F."/>
            <person name="Karlin-Newmann G."/>
            <person name="Liu S.X."/>
            <person name="Lam B."/>
            <person name="Sakano H."/>
            <person name="Wu T."/>
            <person name="Yu G."/>
            <person name="Miranda M."/>
            <person name="Quach H.L."/>
            <person name="Tripp M."/>
            <person name="Chang C.H."/>
            <person name="Lee J.M."/>
            <person name="Toriumi M.J."/>
            <person name="Chan M.M."/>
            <person name="Tang C.C."/>
            <person name="Onodera C.S."/>
            <person name="Deng J.M."/>
            <person name="Akiyama K."/>
            <person name="Ansari Y."/>
            <person name="Arakawa T."/>
            <person name="Banh J."/>
            <person name="Banno F."/>
            <person name="Bowser L."/>
            <person name="Brooks S.Y."/>
            <person name="Carninci P."/>
            <person name="Chao Q."/>
            <person name="Choy N."/>
            <person name="Enju A."/>
            <person name="Goldsmith A.D."/>
            <person name="Gurjal M."/>
            <person name="Hansen N.F."/>
            <person name="Hayashizaki Y."/>
            <person name="Johnson-Hopson C."/>
            <person name="Hsuan V.W."/>
            <person name="Iida K."/>
            <person name="Karnes M."/>
            <person name="Khan S."/>
            <person name="Koesema E."/>
            <person name="Ishida J."/>
            <person name="Jiang P.X."/>
            <person name="Jones T."/>
            <person name="Kawai J."/>
            <person name="Kamiya A."/>
            <person name="Meyers C."/>
            <person name="Nakajima M."/>
            <person name="Narusaka M."/>
            <person name="Seki M."/>
            <person name="Sakurai T."/>
            <person name="Satou M."/>
            <person name="Tamse R."/>
            <person name="Vaysberg M."/>
            <person name="Wallender E.K."/>
            <person name="Wong C."/>
            <person name="Yamamura Y."/>
            <person name="Yuan S."/>
            <person name="Shinozaki K."/>
            <person name="Davis R.W."/>
            <person name="Theologis A."/>
            <person name="Ecker J.R."/>
        </authorList>
    </citation>
    <scope>NUCLEOTIDE SEQUENCE [LARGE SCALE MRNA]</scope>
    <source>
        <strain>cv. Columbia</strain>
    </source>
</reference>
<reference key="4">
    <citation type="journal article" date="2007" name="Plant J.">
        <title>Arabidopsis ESK1 encodes a novel regulator of freezing tolerance.</title>
        <authorList>
            <person name="Xin Z."/>
            <person name="Mandaokar A."/>
            <person name="Chen J."/>
            <person name="Last R.L."/>
            <person name="Browse J."/>
        </authorList>
    </citation>
    <scope>GENE FAMILY</scope>
    <source>
        <strain>cv. Columbia</strain>
    </source>
</reference>
<reference key="5">
    <citation type="journal article" date="2010" name="Plant Physiol.">
        <title>TRICHOME BIREFRINGENCE and its homolog AT5G01360 encode plant-specific DUF231 proteins required for cellulose biosynthesis in Arabidopsis.</title>
        <authorList>
            <person name="Bischoff V."/>
            <person name="Nita S."/>
            <person name="Neumetzler L."/>
            <person name="Schindelasch D."/>
            <person name="Urbain A."/>
            <person name="Eshed R."/>
            <person name="Persson S."/>
            <person name="Delmer D."/>
            <person name="Scheible W.R."/>
        </authorList>
    </citation>
    <scope>GENE FAMILY</scope>
    <scope>NOMENCLATURE</scope>
</reference>
<reference key="6">
    <citation type="journal article" date="2010" name="Plant Signal. Behav.">
        <title>Involvement of TBL/DUF231 proteins into cell wall biology.</title>
        <authorList>
            <person name="Bischoff V."/>
            <person name="Selbig J."/>
            <person name="Scheible W.R."/>
        </authorList>
    </citation>
    <scope>3D-STRUCTURE MODELING</scope>
</reference>
<comment type="function">
    <text evidence="1 2">May act as a bridging protein that binds pectin and other cell wall polysaccharides. Probably involved in maintaining esterification of pectins (By similarity). May be involved in the specific O-acetylation of cell wall polymers (By similarity).</text>
</comment>
<comment type="subcellular location">
    <subcellularLocation>
        <location evidence="4">Membrane</location>
        <topology evidence="4">Single-pass type II membrane protein</topology>
    </subcellularLocation>
</comment>
<comment type="miscellaneous">
    <text evidence="5">Contains 2 motifs that are conserved in esterases, but it is unlikely that this protein belongs to the catalytically active pectin esterases.</text>
</comment>
<comment type="similarity">
    <text evidence="4">Belongs to the PC-esterase family. TBL subfamily.</text>
</comment>
<name>TBL13_ARATH</name>
<protein>
    <recommendedName>
        <fullName>Protein trichome birefringence-like 13</fullName>
    </recommendedName>
</protein>
<evidence type="ECO:0000250" key="1">
    <source>
        <dbReference type="UniProtKB" id="Q9FG35"/>
    </source>
</evidence>
<evidence type="ECO:0000250" key="2">
    <source>
        <dbReference type="UniProtKB" id="Q9LY46"/>
    </source>
</evidence>
<evidence type="ECO:0000255" key="3"/>
<evidence type="ECO:0000305" key="4"/>
<evidence type="ECO:0000305" key="5">
    <source>
    </source>
</evidence>
<gene>
    <name type="primary">TBL13</name>
    <name type="ordered locus">At2g14530</name>
    <name type="ORF">T13P21.9</name>
</gene>
<keyword id="KW-0472">Membrane</keyword>
<keyword id="KW-1185">Reference proteome</keyword>
<keyword id="KW-0735">Signal-anchor</keyword>
<keyword id="KW-0812">Transmembrane</keyword>
<keyword id="KW-1133">Transmembrane helix</keyword>
<organism>
    <name type="scientific">Arabidopsis thaliana</name>
    <name type="common">Mouse-ear cress</name>
    <dbReference type="NCBI Taxonomy" id="3702"/>
    <lineage>
        <taxon>Eukaryota</taxon>
        <taxon>Viridiplantae</taxon>
        <taxon>Streptophyta</taxon>
        <taxon>Embryophyta</taxon>
        <taxon>Tracheophyta</taxon>
        <taxon>Spermatophyta</taxon>
        <taxon>Magnoliopsida</taxon>
        <taxon>eudicotyledons</taxon>
        <taxon>Gunneridae</taxon>
        <taxon>Pentapetalae</taxon>
        <taxon>rosids</taxon>
        <taxon>malvids</taxon>
        <taxon>Brassicales</taxon>
        <taxon>Brassicaceae</taxon>
        <taxon>Camelineae</taxon>
        <taxon>Arabidopsis</taxon>
    </lineage>
</organism>